<dbReference type="EC" id="5.3.1.9" evidence="1"/>
<dbReference type="EMBL" id="CP000261">
    <property type="protein sequence ID" value="ABF35250.1"/>
    <property type="molecule type" value="Genomic_DNA"/>
</dbReference>
<dbReference type="SMR" id="Q1JDQ8"/>
<dbReference type="KEGG" id="spj:MGAS2096_Spy0198"/>
<dbReference type="HOGENOM" id="CLU_037303_0_1_9"/>
<dbReference type="UniPathway" id="UPA00109">
    <property type="reaction ID" value="UER00181"/>
</dbReference>
<dbReference type="UniPathway" id="UPA00138"/>
<dbReference type="GO" id="GO:0005829">
    <property type="term" value="C:cytosol"/>
    <property type="evidence" value="ECO:0007669"/>
    <property type="project" value="TreeGrafter"/>
</dbReference>
<dbReference type="GO" id="GO:0097367">
    <property type="term" value="F:carbohydrate derivative binding"/>
    <property type="evidence" value="ECO:0007669"/>
    <property type="project" value="InterPro"/>
</dbReference>
<dbReference type="GO" id="GO:0004347">
    <property type="term" value="F:glucose-6-phosphate isomerase activity"/>
    <property type="evidence" value="ECO:0007669"/>
    <property type="project" value="UniProtKB-UniRule"/>
</dbReference>
<dbReference type="GO" id="GO:0048029">
    <property type="term" value="F:monosaccharide binding"/>
    <property type="evidence" value="ECO:0007669"/>
    <property type="project" value="TreeGrafter"/>
</dbReference>
<dbReference type="GO" id="GO:0006094">
    <property type="term" value="P:gluconeogenesis"/>
    <property type="evidence" value="ECO:0007669"/>
    <property type="project" value="UniProtKB-UniRule"/>
</dbReference>
<dbReference type="GO" id="GO:0051156">
    <property type="term" value="P:glucose 6-phosphate metabolic process"/>
    <property type="evidence" value="ECO:0007669"/>
    <property type="project" value="TreeGrafter"/>
</dbReference>
<dbReference type="GO" id="GO:0006096">
    <property type="term" value="P:glycolytic process"/>
    <property type="evidence" value="ECO:0007669"/>
    <property type="project" value="UniProtKB-UniRule"/>
</dbReference>
<dbReference type="CDD" id="cd05015">
    <property type="entry name" value="SIS_PGI_1"/>
    <property type="match status" value="1"/>
</dbReference>
<dbReference type="CDD" id="cd05016">
    <property type="entry name" value="SIS_PGI_2"/>
    <property type="match status" value="1"/>
</dbReference>
<dbReference type="FunFam" id="3.40.50.10490:FF:000015">
    <property type="entry name" value="Glucose-6-phosphate isomerase"/>
    <property type="match status" value="1"/>
</dbReference>
<dbReference type="FunFam" id="3.40.50.10490:FF:000016">
    <property type="entry name" value="Glucose-6-phosphate isomerase"/>
    <property type="match status" value="1"/>
</dbReference>
<dbReference type="Gene3D" id="3.40.50.10490">
    <property type="entry name" value="Glucose-6-phosphate isomerase like protein, domain 1"/>
    <property type="match status" value="2"/>
</dbReference>
<dbReference type="HAMAP" id="MF_00473">
    <property type="entry name" value="G6P_isomerase"/>
    <property type="match status" value="1"/>
</dbReference>
<dbReference type="InterPro" id="IPR001672">
    <property type="entry name" value="G6P_Isomerase"/>
</dbReference>
<dbReference type="InterPro" id="IPR018189">
    <property type="entry name" value="Phosphoglucose_isomerase_CS"/>
</dbReference>
<dbReference type="InterPro" id="IPR046348">
    <property type="entry name" value="SIS_dom_sf"/>
</dbReference>
<dbReference type="InterPro" id="IPR035476">
    <property type="entry name" value="SIS_PGI_1"/>
</dbReference>
<dbReference type="InterPro" id="IPR035482">
    <property type="entry name" value="SIS_PGI_2"/>
</dbReference>
<dbReference type="NCBIfam" id="NF010697">
    <property type="entry name" value="PRK14097.1"/>
    <property type="match status" value="1"/>
</dbReference>
<dbReference type="PANTHER" id="PTHR11469">
    <property type="entry name" value="GLUCOSE-6-PHOSPHATE ISOMERASE"/>
    <property type="match status" value="1"/>
</dbReference>
<dbReference type="PANTHER" id="PTHR11469:SF1">
    <property type="entry name" value="GLUCOSE-6-PHOSPHATE ISOMERASE"/>
    <property type="match status" value="1"/>
</dbReference>
<dbReference type="Pfam" id="PF00342">
    <property type="entry name" value="PGI"/>
    <property type="match status" value="1"/>
</dbReference>
<dbReference type="PRINTS" id="PR00662">
    <property type="entry name" value="G6PISOMERASE"/>
</dbReference>
<dbReference type="SUPFAM" id="SSF53697">
    <property type="entry name" value="SIS domain"/>
    <property type="match status" value="1"/>
</dbReference>
<dbReference type="PROSITE" id="PS00765">
    <property type="entry name" value="P_GLUCOSE_ISOMERASE_1"/>
    <property type="match status" value="1"/>
</dbReference>
<dbReference type="PROSITE" id="PS00174">
    <property type="entry name" value="P_GLUCOSE_ISOMERASE_2"/>
    <property type="match status" value="1"/>
</dbReference>
<dbReference type="PROSITE" id="PS51463">
    <property type="entry name" value="P_GLUCOSE_ISOMERASE_3"/>
    <property type="match status" value="1"/>
</dbReference>
<gene>
    <name evidence="1" type="primary">pgi</name>
    <name type="ordered locus">MGAS2096_Spy0198</name>
</gene>
<evidence type="ECO:0000255" key="1">
    <source>
        <dbReference type="HAMAP-Rule" id="MF_00473"/>
    </source>
</evidence>
<keyword id="KW-0963">Cytoplasm</keyword>
<keyword id="KW-0312">Gluconeogenesis</keyword>
<keyword id="KW-0324">Glycolysis</keyword>
<keyword id="KW-0413">Isomerase</keyword>
<accession>Q1JDQ8</accession>
<reference key="1">
    <citation type="journal article" date="2006" name="Proc. Natl. Acad. Sci. U.S.A.">
        <title>Molecular genetic anatomy of inter- and intraserotype variation in the human bacterial pathogen group A Streptococcus.</title>
        <authorList>
            <person name="Beres S.B."/>
            <person name="Richter E.W."/>
            <person name="Nagiec M.J."/>
            <person name="Sumby P."/>
            <person name="Porcella S.F."/>
            <person name="DeLeo F.R."/>
            <person name="Musser J.M."/>
        </authorList>
    </citation>
    <scope>NUCLEOTIDE SEQUENCE [LARGE SCALE GENOMIC DNA]</scope>
    <source>
        <strain>MGAS2096</strain>
    </source>
</reference>
<organism>
    <name type="scientific">Streptococcus pyogenes serotype M12 (strain MGAS2096)</name>
    <dbReference type="NCBI Taxonomy" id="370553"/>
    <lineage>
        <taxon>Bacteria</taxon>
        <taxon>Bacillati</taxon>
        <taxon>Bacillota</taxon>
        <taxon>Bacilli</taxon>
        <taxon>Lactobacillales</taxon>
        <taxon>Streptococcaceae</taxon>
        <taxon>Streptococcus</taxon>
    </lineage>
</organism>
<comment type="function">
    <text evidence="1">Catalyzes the reversible isomerization of glucose-6-phosphate to fructose-6-phosphate.</text>
</comment>
<comment type="catalytic activity">
    <reaction evidence="1">
        <text>alpha-D-glucose 6-phosphate = beta-D-fructose 6-phosphate</text>
        <dbReference type="Rhea" id="RHEA:11816"/>
        <dbReference type="ChEBI" id="CHEBI:57634"/>
        <dbReference type="ChEBI" id="CHEBI:58225"/>
        <dbReference type="EC" id="5.3.1.9"/>
    </reaction>
</comment>
<comment type="pathway">
    <text evidence="1">Carbohydrate biosynthesis; gluconeogenesis.</text>
</comment>
<comment type="pathway">
    <text evidence="1">Carbohydrate degradation; glycolysis; D-glyceraldehyde 3-phosphate and glycerone phosphate from D-glucose: step 2/4.</text>
</comment>
<comment type="subcellular location">
    <subcellularLocation>
        <location evidence="1">Cytoplasm</location>
    </subcellularLocation>
</comment>
<comment type="similarity">
    <text evidence="1">Belongs to the GPI family.</text>
</comment>
<feature type="chain" id="PRO_0000252650" description="Glucose-6-phosphate isomerase">
    <location>
        <begin position="1"/>
        <end position="449"/>
    </location>
</feature>
<feature type="active site" description="Proton donor" evidence="1">
    <location>
        <position position="291"/>
    </location>
</feature>
<feature type="active site" evidence="1">
    <location>
        <position position="312"/>
    </location>
</feature>
<feature type="active site" evidence="1">
    <location>
        <position position="426"/>
    </location>
</feature>
<sequence length="449" mass="49497">MSHITFDYSKVLESFAGQHEIDFLQGQVTEADKLLREGTGPGSDFLGWLDLPENYDKEEFARILTAAEKIKSDSEVLVVIGIGGSYLGAKAAIDFLNHHFANLQTAKERKAPQILYAGNSISSTYLADLVEYVQDKEFSVNVISKSGTTTEPAIAFRVFKELLVKKYGQEEANKRIYATTDKVKGAVKVEADANNWETFVVPDNVGGRFSVLTAVGLLPIAASGADITALMEGANAARKDLSSDKISENIAYQYAAVRNVLYRKGYITEILANYEPSLQYFGEWWKQLAGESEGKDQKGIYPTSANFSTDLHSLGQFIQEGYRNLFETVIRVDKPRKNVIIPELAEDLDGLGYLQGKDVDFVNKKATDGVLLAHTDGGVPNMFVTLPAQDEFTLGYTIYFFELAIAVSGYMNAVNPFDQPGVEAYKRNMFALLGKPGFEALSAELNARL</sequence>
<name>G6PI_STRPB</name>
<proteinExistence type="inferred from homology"/>
<protein>
    <recommendedName>
        <fullName evidence="1">Glucose-6-phosphate isomerase</fullName>
        <shortName evidence="1">GPI</shortName>
        <ecNumber evidence="1">5.3.1.9</ecNumber>
    </recommendedName>
    <alternativeName>
        <fullName evidence="1">Phosphoglucose isomerase</fullName>
        <shortName evidence="1">PGI</shortName>
    </alternativeName>
    <alternativeName>
        <fullName evidence="1">Phosphohexose isomerase</fullName>
        <shortName evidence="1">PHI</shortName>
    </alternativeName>
</protein>